<proteinExistence type="evidence at transcript level"/>
<organism>
    <name type="scientific">African swine fever virus (strain Badajoz 1971 Vero-adapted)</name>
    <name type="common">Ba71V</name>
    <name type="synonym">ASFV</name>
    <dbReference type="NCBI Taxonomy" id="10498"/>
    <lineage>
        <taxon>Viruses</taxon>
        <taxon>Varidnaviria</taxon>
        <taxon>Bamfordvirae</taxon>
        <taxon>Nucleocytoviricota</taxon>
        <taxon>Pokkesviricetes</taxon>
        <taxon>Asfuvirales</taxon>
        <taxon>Asfarviridae</taxon>
        <taxon>Asfivirus</taxon>
        <taxon>African swine fever virus</taxon>
    </lineage>
</organism>
<dbReference type="EMBL" id="U18466">
    <property type="protein sequence ID" value="AAA65343.1"/>
    <property type="molecule type" value="Genomic_DNA"/>
</dbReference>
<dbReference type="RefSeq" id="NP_042807.1">
    <property type="nucleotide sequence ID" value="NC_001659.2"/>
</dbReference>
<dbReference type="GeneID" id="22220344"/>
<dbReference type="KEGG" id="vg:22220344"/>
<dbReference type="Proteomes" id="UP000000624">
    <property type="component" value="Segment"/>
</dbReference>
<dbReference type="GO" id="GO:0044423">
    <property type="term" value="C:virion component"/>
    <property type="evidence" value="ECO:0007669"/>
    <property type="project" value="UniProtKB-KW"/>
</dbReference>
<name>VF171_ASFB7</name>
<accession>Q65185</accession>
<comment type="subcellular location">
    <subcellularLocation>
        <location evidence="2">Virion</location>
    </subcellularLocation>
</comment>
<comment type="induction">
    <text evidence="3">Expressed in the late phase of the viral replicative cycle.</text>
</comment>
<comment type="similarity">
    <text evidence="4">Belongs to the asfivirus H171R family.</text>
</comment>
<protein>
    <recommendedName>
        <fullName>Uncharacterized protein H171R</fullName>
        <shortName>pH171R</shortName>
    </recommendedName>
</protein>
<gene>
    <name type="ordered locus">Ba71V-114</name>
    <name type="ORF">H171R</name>
</gene>
<organismHost>
    <name type="scientific">Ornithodoros</name>
    <name type="common">relapsing fever ticks</name>
    <dbReference type="NCBI Taxonomy" id="6937"/>
</organismHost>
<organismHost>
    <name type="scientific">Sus scrofa</name>
    <name type="common">Pig</name>
    <dbReference type="NCBI Taxonomy" id="9823"/>
</organismHost>
<reference key="1">
    <citation type="journal article" date="1995" name="Virology">
        <title>Analysis of the complete nucleotide sequence of African swine fever virus.</title>
        <authorList>
            <person name="Yanez R.J."/>
            <person name="Rodriguez J.M."/>
            <person name="Nogal M.L."/>
            <person name="Yuste L."/>
            <person name="Enriquez C."/>
            <person name="Rodriguez J.F."/>
            <person name="Vinuela E."/>
        </authorList>
    </citation>
    <scope>NUCLEOTIDE SEQUENCE [LARGE SCALE GENOMIC DNA]</scope>
</reference>
<reference key="2">
    <citation type="journal article" date="2018" name="J. Virol.">
        <title>A Proteomic Atlas of the African Swine Fever Virus Particle.</title>
        <authorList>
            <person name="Alejo A."/>
            <person name="Matamoros T."/>
            <person name="Guerra M."/>
            <person name="Andres G."/>
        </authorList>
    </citation>
    <scope>SUBCELLULAR LOCATION</scope>
</reference>
<reference key="3">
    <citation type="journal article" date="2020" name="J. Virol.">
        <title>The African Swine Fever Virus Transcriptome.</title>
        <authorList>
            <person name="Cackett G."/>
            <person name="Matelska D."/>
            <person name="Sykora M."/>
            <person name="Portugal R."/>
            <person name="Malecki M."/>
            <person name="Baehler J."/>
            <person name="Dixon L."/>
            <person name="Werner F."/>
        </authorList>
    </citation>
    <scope>INDUCTION</scope>
</reference>
<sequence>MVVYDLLVSLSKESIDVLRFVEANLAAFNQQYIFFNIQRKNSITTPLLITPQQEKISQIVEFLMDEYNKNNRRPSGPPREQPMHPLLPYQQSSDEQPMMPYQQPPGNDDQPYEQIYHKKHASQQVNTELNDYYQHILALGDEDKGMDSMLKLPEKAKRGSDDEDDMFSIKN</sequence>
<keyword id="KW-0426">Late protein</keyword>
<keyword id="KW-1185">Reference proteome</keyword>
<keyword id="KW-0946">Virion</keyword>
<evidence type="ECO:0000256" key="1">
    <source>
        <dbReference type="SAM" id="MobiDB-lite"/>
    </source>
</evidence>
<evidence type="ECO:0000269" key="2">
    <source>
    </source>
</evidence>
<evidence type="ECO:0000269" key="3">
    <source>
    </source>
</evidence>
<evidence type="ECO:0000305" key="4"/>
<feature type="chain" id="PRO_0000373553" description="Uncharacterized protein H171R">
    <location>
        <begin position="1"/>
        <end position="171"/>
    </location>
</feature>
<feature type="region of interest" description="Disordered" evidence="1">
    <location>
        <begin position="68"/>
        <end position="112"/>
    </location>
</feature>
<feature type="region of interest" description="Disordered" evidence="1">
    <location>
        <begin position="152"/>
        <end position="171"/>
    </location>
</feature>
<feature type="compositionally biased region" description="Acidic residues" evidence="1">
    <location>
        <begin position="161"/>
        <end position="171"/>
    </location>
</feature>